<protein>
    <recommendedName>
        <fullName evidence="1">Adenosylcobinamide-GDP ribazoletransferase</fullName>
        <ecNumber evidence="1">2.7.8.26</ecNumber>
    </recommendedName>
    <alternativeName>
        <fullName evidence="1">Cobalamin synthase</fullName>
    </alternativeName>
    <alternativeName>
        <fullName evidence="1">Cobalamin-5'-phosphate synthase</fullName>
    </alternativeName>
</protein>
<name>COBS_GEODF</name>
<comment type="function">
    <text evidence="1">Joins adenosylcobinamide-GDP and alpha-ribazole to generate adenosylcobalamin (Ado-cobalamin). Also synthesizes adenosylcobalamin 5'-phosphate from adenosylcobinamide-GDP and alpha-ribazole 5'-phosphate.</text>
</comment>
<comment type="catalytic activity">
    <reaction evidence="1">
        <text>alpha-ribazole + adenosylcob(III)inamide-GDP = adenosylcob(III)alamin + GMP + H(+)</text>
        <dbReference type="Rhea" id="RHEA:16049"/>
        <dbReference type="ChEBI" id="CHEBI:10329"/>
        <dbReference type="ChEBI" id="CHEBI:15378"/>
        <dbReference type="ChEBI" id="CHEBI:18408"/>
        <dbReference type="ChEBI" id="CHEBI:58115"/>
        <dbReference type="ChEBI" id="CHEBI:60487"/>
        <dbReference type="EC" id="2.7.8.26"/>
    </reaction>
</comment>
<comment type="catalytic activity">
    <reaction evidence="1">
        <text>alpha-ribazole 5'-phosphate + adenosylcob(III)inamide-GDP = adenosylcob(III)alamin 5'-phosphate + GMP + H(+)</text>
        <dbReference type="Rhea" id="RHEA:23560"/>
        <dbReference type="ChEBI" id="CHEBI:15378"/>
        <dbReference type="ChEBI" id="CHEBI:57918"/>
        <dbReference type="ChEBI" id="CHEBI:58115"/>
        <dbReference type="ChEBI" id="CHEBI:60487"/>
        <dbReference type="ChEBI" id="CHEBI:60493"/>
        <dbReference type="EC" id="2.7.8.26"/>
    </reaction>
</comment>
<comment type="cofactor">
    <cofactor evidence="1">
        <name>Mg(2+)</name>
        <dbReference type="ChEBI" id="CHEBI:18420"/>
    </cofactor>
</comment>
<comment type="pathway">
    <text evidence="1">Cofactor biosynthesis; adenosylcobalamin biosynthesis; adenosylcobalamin from cob(II)yrinate a,c-diamide: step 7/7.</text>
</comment>
<comment type="subcellular location">
    <subcellularLocation>
        <location evidence="1">Cell inner membrane</location>
        <topology evidence="1">Multi-pass membrane protein</topology>
    </subcellularLocation>
</comment>
<comment type="similarity">
    <text evidence="1">Belongs to the CobS family.</text>
</comment>
<dbReference type="EC" id="2.7.8.26" evidence="1"/>
<dbReference type="EMBL" id="CP001390">
    <property type="protein sequence ID" value="ACM18907.1"/>
    <property type="molecule type" value="Genomic_DNA"/>
</dbReference>
<dbReference type="RefSeq" id="WP_012645636.1">
    <property type="nucleotide sequence ID" value="NC_011979.1"/>
</dbReference>
<dbReference type="STRING" id="316067.Geob_0540"/>
<dbReference type="KEGG" id="geo:Geob_0540"/>
<dbReference type="eggNOG" id="COG0368">
    <property type="taxonomic scope" value="Bacteria"/>
</dbReference>
<dbReference type="HOGENOM" id="CLU_057426_1_0_7"/>
<dbReference type="OrthoDB" id="9794223at2"/>
<dbReference type="UniPathway" id="UPA00148">
    <property type="reaction ID" value="UER00238"/>
</dbReference>
<dbReference type="Proteomes" id="UP000007721">
    <property type="component" value="Chromosome"/>
</dbReference>
<dbReference type="GO" id="GO:0005886">
    <property type="term" value="C:plasma membrane"/>
    <property type="evidence" value="ECO:0007669"/>
    <property type="project" value="UniProtKB-SubCell"/>
</dbReference>
<dbReference type="GO" id="GO:0051073">
    <property type="term" value="F:adenosylcobinamide-GDP ribazoletransferase activity"/>
    <property type="evidence" value="ECO:0007669"/>
    <property type="project" value="UniProtKB-UniRule"/>
</dbReference>
<dbReference type="GO" id="GO:0008818">
    <property type="term" value="F:cobalamin 5'-phosphate synthase activity"/>
    <property type="evidence" value="ECO:0007669"/>
    <property type="project" value="UniProtKB-UniRule"/>
</dbReference>
<dbReference type="GO" id="GO:0009236">
    <property type="term" value="P:cobalamin biosynthetic process"/>
    <property type="evidence" value="ECO:0007669"/>
    <property type="project" value="UniProtKB-UniRule"/>
</dbReference>
<dbReference type="HAMAP" id="MF_00719">
    <property type="entry name" value="CobS"/>
    <property type="match status" value="1"/>
</dbReference>
<dbReference type="InterPro" id="IPR003805">
    <property type="entry name" value="CobS"/>
</dbReference>
<dbReference type="NCBIfam" id="TIGR00317">
    <property type="entry name" value="cobS"/>
    <property type="match status" value="1"/>
</dbReference>
<dbReference type="PANTHER" id="PTHR34148">
    <property type="entry name" value="ADENOSYLCOBINAMIDE-GDP RIBAZOLETRANSFERASE"/>
    <property type="match status" value="1"/>
</dbReference>
<dbReference type="PANTHER" id="PTHR34148:SF1">
    <property type="entry name" value="ADENOSYLCOBINAMIDE-GDP RIBAZOLETRANSFERASE"/>
    <property type="match status" value="1"/>
</dbReference>
<dbReference type="Pfam" id="PF02654">
    <property type="entry name" value="CobS"/>
    <property type="match status" value="1"/>
</dbReference>
<reference key="1">
    <citation type="submission" date="2009-01" db="EMBL/GenBank/DDBJ databases">
        <title>Complete sequence of Geobacter sp. FRC-32.</title>
        <authorList>
            <consortium name="US DOE Joint Genome Institute"/>
            <person name="Lucas S."/>
            <person name="Copeland A."/>
            <person name="Lapidus A."/>
            <person name="Glavina del Rio T."/>
            <person name="Dalin E."/>
            <person name="Tice H."/>
            <person name="Bruce D."/>
            <person name="Goodwin L."/>
            <person name="Pitluck S."/>
            <person name="Saunders E."/>
            <person name="Brettin T."/>
            <person name="Detter J.C."/>
            <person name="Han C."/>
            <person name="Larimer F."/>
            <person name="Land M."/>
            <person name="Hauser L."/>
            <person name="Kyrpides N."/>
            <person name="Ovchinnikova G."/>
            <person name="Kostka J."/>
            <person name="Richardson P."/>
        </authorList>
    </citation>
    <scope>NUCLEOTIDE SEQUENCE [LARGE SCALE GENOMIC DNA]</scope>
    <source>
        <strain>DSM 22248 / JCM 15807 / FRC-32</strain>
    </source>
</reference>
<sequence>MLRLYFVALQFLAIIPIPFSFRCREEDLGRSMSFFPLVGLTLGLLLAGCDYLLALALPRPVADLLLVAILALVTGALHLDGLADVCDGLAARGGRERFLAVMKDSRVGAVGVVGLVLALLLKYQALFAVTTDKWETLLFFPMVARFSQVQLTVGSKRARQDGLGSLFIGGAGSMQVAVAAFFTVVTGWLLLGLPGIGCAAVCSLFTCLAKAWFHRKLGGITGDAIGCVSELNEILCLMTLVAIGGRF</sequence>
<accession>B9LZU3</accession>
<feature type="chain" id="PRO_1000148024" description="Adenosylcobinamide-GDP ribazoletransferase">
    <location>
        <begin position="1"/>
        <end position="247"/>
    </location>
</feature>
<feature type="transmembrane region" description="Helical" evidence="1">
    <location>
        <begin position="1"/>
        <end position="21"/>
    </location>
</feature>
<feature type="transmembrane region" description="Helical" evidence="1">
    <location>
        <begin position="37"/>
        <end position="57"/>
    </location>
</feature>
<feature type="transmembrane region" description="Helical" evidence="1">
    <location>
        <begin position="61"/>
        <end position="81"/>
    </location>
</feature>
<feature type="transmembrane region" description="Helical" evidence="1">
    <location>
        <begin position="109"/>
        <end position="129"/>
    </location>
</feature>
<feature type="transmembrane region" description="Helical" evidence="1">
    <location>
        <begin position="176"/>
        <end position="196"/>
    </location>
</feature>
<organism>
    <name type="scientific">Geotalea daltonii (strain DSM 22248 / JCM 15807 / FRC-32)</name>
    <name type="common">Geobacter daltonii</name>
    <dbReference type="NCBI Taxonomy" id="316067"/>
    <lineage>
        <taxon>Bacteria</taxon>
        <taxon>Pseudomonadati</taxon>
        <taxon>Thermodesulfobacteriota</taxon>
        <taxon>Desulfuromonadia</taxon>
        <taxon>Geobacterales</taxon>
        <taxon>Geobacteraceae</taxon>
        <taxon>Geotalea</taxon>
    </lineage>
</organism>
<keyword id="KW-0997">Cell inner membrane</keyword>
<keyword id="KW-1003">Cell membrane</keyword>
<keyword id="KW-0169">Cobalamin biosynthesis</keyword>
<keyword id="KW-0460">Magnesium</keyword>
<keyword id="KW-0472">Membrane</keyword>
<keyword id="KW-1185">Reference proteome</keyword>
<keyword id="KW-0808">Transferase</keyword>
<keyword id="KW-0812">Transmembrane</keyword>
<keyword id="KW-1133">Transmembrane helix</keyword>
<proteinExistence type="inferred from homology"/>
<evidence type="ECO:0000255" key="1">
    <source>
        <dbReference type="HAMAP-Rule" id="MF_00719"/>
    </source>
</evidence>
<gene>
    <name evidence="1" type="primary">cobS</name>
    <name type="ordered locus">Geob_0540</name>
</gene>